<feature type="chain" id="PRO_1000135816" description="3-isopropylmalate dehydratase small subunit">
    <location>
        <begin position="1"/>
        <end position="201"/>
    </location>
</feature>
<proteinExistence type="inferred from homology"/>
<gene>
    <name evidence="1" type="primary">leuD</name>
    <name type="ordered locus">Mext_0296</name>
</gene>
<evidence type="ECO:0000255" key="1">
    <source>
        <dbReference type="HAMAP-Rule" id="MF_01031"/>
    </source>
</evidence>
<protein>
    <recommendedName>
        <fullName evidence="1">3-isopropylmalate dehydratase small subunit</fullName>
        <ecNumber evidence="1">4.2.1.33</ecNumber>
    </recommendedName>
    <alternativeName>
        <fullName evidence="1">Alpha-IPM isomerase</fullName>
        <shortName evidence="1">IPMI</shortName>
    </alternativeName>
    <alternativeName>
        <fullName evidence="1">Isopropylmalate isomerase</fullName>
    </alternativeName>
</protein>
<reference key="1">
    <citation type="submission" date="2007-12" db="EMBL/GenBank/DDBJ databases">
        <title>Complete sequence of Methylobacterium extorquens PA1.</title>
        <authorList>
            <consortium name="US DOE Joint Genome Institute"/>
            <person name="Copeland A."/>
            <person name="Lucas S."/>
            <person name="Lapidus A."/>
            <person name="Barry K."/>
            <person name="Glavina del Rio T."/>
            <person name="Dalin E."/>
            <person name="Tice H."/>
            <person name="Pitluck S."/>
            <person name="Saunders E."/>
            <person name="Brettin T."/>
            <person name="Bruce D."/>
            <person name="Detter J.C."/>
            <person name="Han C."/>
            <person name="Schmutz J."/>
            <person name="Larimer F."/>
            <person name="Land M."/>
            <person name="Hauser L."/>
            <person name="Kyrpides N."/>
            <person name="Kim E."/>
            <person name="Marx C."/>
            <person name="Richardson P."/>
        </authorList>
    </citation>
    <scope>NUCLEOTIDE SEQUENCE [LARGE SCALE GENOMIC DNA]</scope>
    <source>
        <strain>PA1</strain>
    </source>
</reference>
<comment type="function">
    <text evidence="1">Catalyzes the isomerization between 2-isopropylmalate and 3-isopropylmalate, via the formation of 2-isopropylmaleate.</text>
</comment>
<comment type="catalytic activity">
    <reaction evidence="1">
        <text>(2R,3S)-3-isopropylmalate = (2S)-2-isopropylmalate</text>
        <dbReference type="Rhea" id="RHEA:32287"/>
        <dbReference type="ChEBI" id="CHEBI:1178"/>
        <dbReference type="ChEBI" id="CHEBI:35121"/>
        <dbReference type="EC" id="4.2.1.33"/>
    </reaction>
</comment>
<comment type="pathway">
    <text evidence="1">Amino-acid biosynthesis; L-leucine biosynthesis; L-leucine from 3-methyl-2-oxobutanoate: step 2/4.</text>
</comment>
<comment type="subunit">
    <text evidence="1">Heterodimer of LeuC and LeuD.</text>
</comment>
<comment type="similarity">
    <text evidence="1">Belongs to the LeuD family. LeuD type 1 subfamily.</text>
</comment>
<accession>A9VZG4</accession>
<dbReference type="EC" id="4.2.1.33" evidence="1"/>
<dbReference type="EMBL" id="CP000908">
    <property type="protein sequence ID" value="ABY28720.1"/>
    <property type="molecule type" value="Genomic_DNA"/>
</dbReference>
<dbReference type="RefSeq" id="WP_012252105.1">
    <property type="nucleotide sequence ID" value="NC_010172.1"/>
</dbReference>
<dbReference type="SMR" id="A9VZG4"/>
<dbReference type="GeneID" id="72987551"/>
<dbReference type="KEGG" id="mex:Mext_0296"/>
<dbReference type="eggNOG" id="COG0066">
    <property type="taxonomic scope" value="Bacteria"/>
</dbReference>
<dbReference type="HOGENOM" id="CLU_081378_0_3_5"/>
<dbReference type="BioCyc" id="MEXT419610:MEXT_RS01435-MONOMER"/>
<dbReference type="UniPathway" id="UPA00048">
    <property type="reaction ID" value="UER00071"/>
</dbReference>
<dbReference type="GO" id="GO:0009316">
    <property type="term" value="C:3-isopropylmalate dehydratase complex"/>
    <property type="evidence" value="ECO:0007669"/>
    <property type="project" value="InterPro"/>
</dbReference>
<dbReference type="GO" id="GO:0003861">
    <property type="term" value="F:3-isopropylmalate dehydratase activity"/>
    <property type="evidence" value="ECO:0007669"/>
    <property type="project" value="UniProtKB-UniRule"/>
</dbReference>
<dbReference type="GO" id="GO:0009098">
    <property type="term" value="P:L-leucine biosynthetic process"/>
    <property type="evidence" value="ECO:0007669"/>
    <property type="project" value="UniProtKB-UniRule"/>
</dbReference>
<dbReference type="CDD" id="cd01577">
    <property type="entry name" value="IPMI_Swivel"/>
    <property type="match status" value="1"/>
</dbReference>
<dbReference type="FunFam" id="3.20.19.10:FF:000003">
    <property type="entry name" value="3-isopropylmalate dehydratase small subunit"/>
    <property type="match status" value="1"/>
</dbReference>
<dbReference type="Gene3D" id="3.20.19.10">
    <property type="entry name" value="Aconitase, domain 4"/>
    <property type="match status" value="1"/>
</dbReference>
<dbReference type="HAMAP" id="MF_01031">
    <property type="entry name" value="LeuD_type1"/>
    <property type="match status" value="1"/>
</dbReference>
<dbReference type="InterPro" id="IPR004431">
    <property type="entry name" value="3-IsopropMal_deHydase_ssu"/>
</dbReference>
<dbReference type="InterPro" id="IPR015928">
    <property type="entry name" value="Aconitase/3IPM_dehydase_swvl"/>
</dbReference>
<dbReference type="InterPro" id="IPR000573">
    <property type="entry name" value="AconitaseA/IPMdHydase_ssu_swvl"/>
</dbReference>
<dbReference type="InterPro" id="IPR033940">
    <property type="entry name" value="IPMI_Swivel"/>
</dbReference>
<dbReference type="InterPro" id="IPR050075">
    <property type="entry name" value="LeuD"/>
</dbReference>
<dbReference type="NCBIfam" id="TIGR00171">
    <property type="entry name" value="leuD"/>
    <property type="match status" value="1"/>
</dbReference>
<dbReference type="NCBIfam" id="NF002458">
    <property type="entry name" value="PRK01641.1"/>
    <property type="match status" value="1"/>
</dbReference>
<dbReference type="PANTHER" id="PTHR43345:SF5">
    <property type="entry name" value="3-ISOPROPYLMALATE DEHYDRATASE SMALL SUBUNIT"/>
    <property type="match status" value="1"/>
</dbReference>
<dbReference type="PANTHER" id="PTHR43345">
    <property type="entry name" value="3-ISOPROPYLMALATE DEHYDRATASE SMALL SUBUNIT 2-RELATED-RELATED"/>
    <property type="match status" value="1"/>
</dbReference>
<dbReference type="Pfam" id="PF00694">
    <property type="entry name" value="Aconitase_C"/>
    <property type="match status" value="1"/>
</dbReference>
<dbReference type="SUPFAM" id="SSF52016">
    <property type="entry name" value="LeuD/IlvD-like"/>
    <property type="match status" value="1"/>
</dbReference>
<sequence length="201" mass="22113">MEKFTTLEGVAAPMRIINIDTDRIIPKQYLKTIKRTGLGQGLFSEMRYNDDGSENPDFVLNQPAYRHAKTLVVGDNFGCGSSREHAPWALADFGIRCVISTSFADIFFNNCAKNGILAIVVSPEDLEKLFQDAERGANATLTIDLAAQTIKGPDGGTLHFDIDEGRKHNLLNGLDEIGLTLDQKAPAIDAYEAKLAQREWA</sequence>
<name>LEUD_METEP</name>
<keyword id="KW-0028">Amino-acid biosynthesis</keyword>
<keyword id="KW-0100">Branched-chain amino acid biosynthesis</keyword>
<keyword id="KW-0432">Leucine biosynthesis</keyword>
<keyword id="KW-0456">Lyase</keyword>
<organism>
    <name type="scientific">Methylorubrum extorquens (strain PA1)</name>
    <name type="common">Methylobacterium extorquens</name>
    <dbReference type="NCBI Taxonomy" id="419610"/>
    <lineage>
        <taxon>Bacteria</taxon>
        <taxon>Pseudomonadati</taxon>
        <taxon>Pseudomonadota</taxon>
        <taxon>Alphaproteobacteria</taxon>
        <taxon>Hyphomicrobiales</taxon>
        <taxon>Methylobacteriaceae</taxon>
        <taxon>Methylorubrum</taxon>
    </lineage>
</organism>